<gene>
    <name type="ordered locus">YDR095C</name>
</gene>
<sequence length="136" mass="15189">MRSGNSGSCNHFLVFLRKVVTCHNAAIVRKTTKYNSLKHKTPPLPLALALADALSPQNFFHITSPASLSYSWRRADPGRKGRTQPLPTQGSARRFLHTPQGGVEPCRVIHIITSYMKSISYHIGIHSTKEEKNCNH</sequence>
<name>YD095_YEAST</name>
<evidence type="ECO:0000256" key="1">
    <source>
        <dbReference type="SAM" id="MobiDB-lite"/>
    </source>
</evidence>
<evidence type="ECO:0000305" key="2"/>
<evidence type="ECO:0000305" key="3">
    <source>
    </source>
</evidence>
<comment type="miscellaneous">
    <text evidence="2">Partially overlaps DFN2.</text>
</comment>
<comment type="caution">
    <text evidence="3">Product of a dubious gene prediction unlikely to encode a functional protein. Because of that it is not part of the S.cerevisiae S288c complete/reference proteome set.</text>
</comment>
<reference key="1">
    <citation type="journal article" date="1997" name="Nature">
        <title>The nucleotide sequence of Saccharomyces cerevisiae chromosome IV.</title>
        <authorList>
            <person name="Jacq C."/>
            <person name="Alt-Moerbe J."/>
            <person name="Andre B."/>
            <person name="Arnold W."/>
            <person name="Bahr A."/>
            <person name="Ballesta J.P.G."/>
            <person name="Bargues M."/>
            <person name="Baron L."/>
            <person name="Becker A."/>
            <person name="Biteau N."/>
            <person name="Bloecker H."/>
            <person name="Blugeon C."/>
            <person name="Boskovic J."/>
            <person name="Brandt P."/>
            <person name="Brueckner M."/>
            <person name="Buitrago M.J."/>
            <person name="Coster F."/>
            <person name="Delaveau T."/>
            <person name="del Rey F."/>
            <person name="Dujon B."/>
            <person name="Eide L.G."/>
            <person name="Garcia-Cantalejo J.M."/>
            <person name="Goffeau A."/>
            <person name="Gomez-Peris A."/>
            <person name="Granotier C."/>
            <person name="Hanemann V."/>
            <person name="Hankeln T."/>
            <person name="Hoheisel J.D."/>
            <person name="Jaeger W."/>
            <person name="Jimenez A."/>
            <person name="Jonniaux J.-L."/>
            <person name="Kraemer C."/>
            <person name="Kuester H."/>
            <person name="Laamanen P."/>
            <person name="Legros Y."/>
            <person name="Louis E.J."/>
            <person name="Moeller-Rieker S."/>
            <person name="Monnet A."/>
            <person name="Moro M."/>
            <person name="Mueller-Auer S."/>
            <person name="Nussbaumer B."/>
            <person name="Paricio N."/>
            <person name="Paulin L."/>
            <person name="Perea J."/>
            <person name="Perez-Alonso M."/>
            <person name="Perez-Ortin J.E."/>
            <person name="Pohl T.M."/>
            <person name="Prydz H."/>
            <person name="Purnelle B."/>
            <person name="Rasmussen S.W."/>
            <person name="Remacha M.A."/>
            <person name="Revuelta J.L."/>
            <person name="Rieger M."/>
            <person name="Salom D."/>
            <person name="Saluz H.P."/>
            <person name="Saiz J.E."/>
            <person name="Saren A.-M."/>
            <person name="Schaefer M."/>
            <person name="Scharfe M."/>
            <person name="Schmidt E.R."/>
            <person name="Schneider C."/>
            <person name="Scholler P."/>
            <person name="Schwarz S."/>
            <person name="Soler-Mira A."/>
            <person name="Urrestarazu L.A."/>
            <person name="Verhasselt P."/>
            <person name="Vissers S."/>
            <person name="Voet M."/>
            <person name="Volckaert G."/>
            <person name="Wagner G."/>
            <person name="Wambutt R."/>
            <person name="Wedler E."/>
            <person name="Wedler H."/>
            <person name="Woelfl S."/>
            <person name="Harris D.E."/>
            <person name="Bowman S."/>
            <person name="Brown D."/>
            <person name="Churcher C.M."/>
            <person name="Connor R."/>
            <person name="Dedman K."/>
            <person name="Gentles S."/>
            <person name="Hamlin N."/>
            <person name="Hunt S."/>
            <person name="Jones L."/>
            <person name="McDonald S."/>
            <person name="Murphy L.D."/>
            <person name="Niblett D."/>
            <person name="Odell C."/>
            <person name="Oliver K."/>
            <person name="Rajandream M.A."/>
            <person name="Richards C."/>
            <person name="Shore L."/>
            <person name="Walsh S.V."/>
            <person name="Barrell B.G."/>
            <person name="Dietrich F.S."/>
            <person name="Mulligan J.T."/>
            <person name="Allen E."/>
            <person name="Araujo R."/>
            <person name="Aviles E."/>
            <person name="Berno A."/>
            <person name="Carpenter J."/>
            <person name="Chen E."/>
            <person name="Cherry J.M."/>
            <person name="Chung E."/>
            <person name="Duncan M."/>
            <person name="Hunicke-Smith S."/>
            <person name="Hyman R.W."/>
            <person name="Komp C."/>
            <person name="Lashkari D."/>
            <person name="Lew H."/>
            <person name="Lin D."/>
            <person name="Mosedale D."/>
            <person name="Nakahara K."/>
            <person name="Namath A."/>
            <person name="Oefner P."/>
            <person name="Oh C."/>
            <person name="Petel F.X."/>
            <person name="Roberts D."/>
            <person name="Schramm S."/>
            <person name="Schroeder M."/>
            <person name="Shogren T."/>
            <person name="Shroff N."/>
            <person name="Winant A."/>
            <person name="Yelton M.A."/>
            <person name="Botstein D."/>
            <person name="Davis R.W."/>
            <person name="Johnston M."/>
            <person name="Andrews S."/>
            <person name="Brinkman R."/>
            <person name="Cooper J."/>
            <person name="Ding H."/>
            <person name="Du Z."/>
            <person name="Favello A."/>
            <person name="Fulton L."/>
            <person name="Gattung S."/>
            <person name="Greco T."/>
            <person name="Hallsworth K."/>
            <person name="Hawkins J."/>
            <person name="Hillier L.W."/>
            <person name="Jier M."/>
            <person name="Johnson D."/>
            <person name="Johnston L."/>
            <person name="Kirsten J."/>
            <person name="Kucaba T."/>
            <person name="Langston Y."/>
            <person name="Latreille P."/>
            <person name="Le T."/>
            <person name="Mardis E."/>
            <person name="Menezes S."/>
            <person name="Miller N."/>
            <person name="Nhan M."/>
            <person name="Pauley A."/>
            <person name="Peluso D."/>
            <person name="Rifkin L."/>
            <person name="Riles L."/>
            <person name="Taich A."/>
            <person name="Trevaskis E."/>
            <person name="Vignati D."/>
            <person name="Wilcox L."/>
            <person name="Wohldman P."/>
            <person name="Vaudin M."/>
            <person name="Wilson R."/>
            <person name="Waterston R."/>
            <person name="Albermann K."/>
            <person name="Hani J."/>
            <person name="Heumann K."/>
            <person name="Kleine K."/>
            <person name="Mewes H.-W."/>
            <person name="Zollner A."/>
            <person name="Zaccaria P."/>
        </authorList>
    </citation>
    <scope>NUCLEOTIDE SEQUENCE [LARGE SCALE GENOMIC DNA]</scope>
    <source>
        <strain>ATCC 204508 / S288c</strain>
    </source>
</reference>
<reference key="2">
    <citation type="journal article" date="2014" name="G3 (Bethesda)">
        <title>The reference genome sequence of Saccharomyces cerevisiae: Then and now.</title>
        <authorList>
            <person name="Engel S.R."/>
            <person name="Dietrich F.S."/>
            <person name="Fisk D.G."/>
            <person name="Binkley G."/>
            <person name="Balakrishnan R."/>
            <person name="Costanzo M.C."/>
            <person name="Dwight S.S."/>
            <person name="Hitz B.C."/>
            <person name="Karra K."/>
            <person name="Nash R.S."/>
            <person name="Weng S."/>
            <person name="Wong E.D."/>
            <person name="Lloyd P."/>
            <person name="Skrzypek M.S."/>
            <person name="Miyasato S.R."/>
            <person name="Simison M."/>
            <person name="Cherry J.M."/>
        </authorList>
    </citation>
    <scope>GENOME REANNOTATION</scope>
    <source>
        <strain>ATCC 204508 / S288c</strain>
    </source>
</reference>
<proteinExistence type="uncertain"/>
<dbReference type="EMBL" id="Z47746">
    <property type="protein sequence ID" value="CAA87669.1"/>
    <property type="molecule type" value="Genomic_DNA"/>
</dbReference>
<dbReference type="PIR" id="S51244">
    <property type="entry name" value="S51244"/>
</dbReference>
<dbReference type="DIP" id="DIP-2780N"/>
<dbReference type="IntAct" id="Q03831">
    <property type="interactions" value="1"/>
</dbReference>
<dbReference type="MINT" id="Q03831"/>
<dbReference type="PaxDb" id="4932-YDR095C"/>
<dbReference type="EnsemblFungi" id="YDR095C_mRNA">
    <property type="protein sequence ID" value="YDR095C"/>
    <property type="gene ID" value="YDR095C"/>
</dbReference>
<dbReference type="AGR" id="SGD:S000002502"/>
<dbReference type="SGD" id="S000002502">
    <property type="gene designation" value="YDR095C"/>
</dbReference>
<dbReference type="HOGENOM" id="CLU_1877060_0_0_1"/>
<organism>
    <name type="scientific">Saccharomyces cerevisiae (strain ATCC 204508 / S288c)</name>
    <name type="common">Baker's yeast</name>
    <dbReference type="NCBI Taxonomy" id="559292"/>
    <lineage>
        <taxon>Eukaryota</taxon>
        <taxon>Fungi</taxon>
        <taxon>Dikarya</taxon>
        <taxon>Ascomycota</taxon>
        <taxon>Saccharomycotina</taxon>
        <taxon>Saccharomycetes</taxon>
        <taxon>Saccharomycetales</taxon>
        <taxon>Saccharomycetaceae</taxon>
        <taxon>Saccharomyces</taxon>
    </lineage>
</organism>
<accession>Q03831</accession>
<feature type="chain" id="PRO_0000299872" description="Putative uncharacterized protein YDR095C">
    <location>
        <begin position="1"/>
        <end position="136"/>
    </location>
</feature>
<feature type="region of interest" description="Disordered" evidence="1">
    <location>
        <begin position="74"/>
        <end position="97"/>
    </location>
</feature>
<protein>
    <recommendedName>
        <fullName>Putative uncharacterized protein YDR095C</fullName>
    </recommendedName>
</protein>